<gene>
    <name evidence="1" type="primary">menC</name>
    <name type="ordered locus">ML2268</name>
</gene>
<keyword id="KW-0456">Lyase</keyword>
<keyword id="KW-0460">Magnesium</keyword>
<keyword id="KW-0474">Menaquinone biosynthesis</keyword>
<keyword id="KW-0479">Metal-binding</keyword>
<keyword id="KW-1185">Reference proteome</keyword>
<proteinExistence type="inferred from homology"/>
<name>MENC_MYCLE</name>
<reference key="1">
    <citation type="journal article" date="2001" name="Nature">
        <title>Massive gene decay in the leprosy bacillus.</title>
        <authorList>
            <person name="Cole S.T."/>
            <person name="Eiglmeier K."/>
            <person name="Parkhill J."/>
            <person name="James K.D."/>
            <person name="Thomson N.R."/>
            <person name="Wheeler P.R."/>
            <person name="Honore N."/>
            <person name="Garnier T."/>
            <person name="Churcher C.M."/>
            <person name="Harris D.E."/>
            <person name="Mungall K.L."/>
            <person name="Basham D."/>
            <person name="Brown D."/>
            <person name="Chillingworth T."/>
            <person name="Connor R."/>
            <person name="Davies R.M."/>
            <person name="Devlin K."/>
            <person name="Duthoy S."/>
            <person name="Feltwell T."/>
            <person name="Fraser A."/>
            <person name="Hamlin N."/>
            <person name="Holroyd S."/>
            <person name="Hornsby T."/>
            <person name="Jagels K."/>
            <person name="Lacroix C."/>
            <person name="Maclean J."/>
            <person name="Moule S."/>
            <person name="Murphy L.D."/>
            <person name="Oliver K."/>
            <person name="Quail M.A."/>
            <person name="Rajandream M.A."/>
            <person name="Rutherford K.M."/>
            <person name="Rutter S."/>
            <person name="Seeger K."/>
            <person name="Simon S."/>
            <person name="Simmonds M."/>
            <person name="Skelton J."/>
            <person name="Squares R."/>
            <person name="Squares S."/>
            <person name="Stevens K."/>
            <person name="Taylor K."/>
            <person name="Whitehead S."/>
            <person name="Woodward J.R."/>
            <person name="Barrell B.G."/>
        </authorList>
    </citation>
    <scope>NUCLEOTIDE SEQUENCE [LARGE SCALE GENOMIC DNA]</scope>
    <source>
        <strain>TN</strain>
    </source>
</reference>
<sequence length="334" mass="35311">MIPTLTELLDRLHVVALPMRVRFRGITTREVALIDGPAGWGEFGAFLEYQPLEASAWLVAGIEAAYGEPPEGRRDRIPINATVPAVSATQVPEVLARFPGVRTAKVKVAEPGQNLADDVDRVNAVRELVETVRVDANGGWSVEAAAQAAVALTADGPLEYLEQPCATVAELAALRRRVDIPIAADESIRKADDPLAVVRSHAADVAVLKVAPLGGIASFLAIAAQIDIPVVVSSALDSVVGITAGLIAAAALPELDYACGLGTGRLFVADVAEPMLPVDGFLPVGPVTPDPARLQALGTPPARRQWWIDRVKTCYSLLVPCAGDQSGLRRPRDR</sequence>
<feature type="chain" id="PRO_0000171278" description="o-succinylbenzoate synthase">
    <location>
        <begin position="1"/>
        <end position="334"/>
    </location>
</feature>
<feature type="active site" description="Proton donor" evidence="1">
    <location>
        <position position="107"/>
    </location>
</feature>
<feature type="active site" description="Proton acceptor" evidence="1">
    <location>
        <position position="209"/>
    </location>
</feature>
<feature type="binding site" evidence="1">
    <location>
        <position position="135"/>
    </location>
    <ligand>
        <name>Mg(2+)</name>
        <dbReference type="ChEBI" id="CHEBI:18420"/>
    </ligand>
</feature>
<feature type="binding site" evidence="1">
    <location>
        <position position="162"/>
    </location>
    <ligand>
        <name>Mg(2+)</name>
        <dbReference type="ChEBI" id="CHEBI:18420"/>
    </ligand>
</feature>
<feature type="binding site" evidence="1">
    <location>
        <position position="185"/>
    </location>
    <ligand>
        <name>Mg(2+)</name>
        <dbReference type="ChEBI" id="CHEBI:18420"/>
    </ligand>
</feature>
<protein>
    <recommendedName>
        <fullName evidence="1">o-succinylbenzoate synthase</fullName>
        <shortName evidence="1">OSB synthase</shortName>
        <shortName evidence="1">OSBS</shortName>
        <ecNumber evidence="1">4.2.1.113</ecNumber>
    </recommendedName>
    <alternativeName>
        <fullName evidence="1">4-(2'-carboxyphenyl)-4-oxybutyric acid synthase</fullName>
    </alternativeName>
    <alternativeName>
        <fullName evidence="1">o-succinylbenzoic acid synthase</fullName>
    </alternativeName>
</protein>
<accession>Q9CBB2</accession>
<dbReference type="EC" id="4.2.1.113" evidence="1"/>
<dbReference type="EMBL" id="AL583925">
    <property type="protein sequence ID" value="CAC31784.1"/>
    <property type="molecule type" value="Genomic_DNA"/>
</dbReference>
<dbReference type="PIR" id="H87192">
    <property type="entry name" value="H87192"/>
</dbReference>
<dbReference type="RefSeq" id="NP_302476.1">
    <property type="nucleotide sequence ID" value="NC_002677.1"/>
</dbReference>
<dbReference type="RefSeq" id="WP_010908796.1">
    <property type="nucleotide sequence ID" value="NC_002677.1"/>
</dbReference>
<dbReference type="SMR" id="Q9CBB2"/>
<dbReference type="STRING" id="272631.gene:17576127"/>
<dbReference type="KEGG" id="mle:ML2268"/>
<dbReference type="PATRIC" id="fig|272631.5.peg.4339"/>
<dbReference type="Leproma" id="ML2268"/>
<dbReference type="eggNOG" id="COG4948">
    <property type="taxonomic scope" value="Bacteria"/>
</dbReference>
<dbReference type="HOGENOM" id="CLU_057696_0_0_11"/>
<dbReference type="OrthoDB" id="3725747at2"/>
<dbReference type="UniPathway" id="UPA00079"/>
<dbReference type="UniPathway" id="UPA01057">
    <property type="reaction ID" value="UER00165"/>
</dbReference>
<dbReference type="Proteomes" id="UP000000806">
    <property type="component" value="Chromosome"/>
</dbReference>
<dbReference type="GO" id="GO:0000287">
    <property type="term" value="F:magnesium ion binding"/>
    <property type="evidence" value="ECO:0007669"/>
    <property type="project" value="UniProtKB-UniRule"/>
</dbReference>
<dbReference type="GO" id="GO:0043748">
    <property type="term" value="F:O-succinylbenzoate synthase activity"/>
    <property type="evidence" value="ECO:0007669"/>
    <property type="project" value="UniProtKB-EC"/>
</dbReference>
<dbReference type="GO" id="GO:0009234">
    <property type="term" value="P:menaquinone biosynthetic process"/>
    <property type="evidence" value="ECO:0007669"/>
    <property type="project" value="UniProtKB-UniRule"/>
</dbReference>
<dbReference type="CDD" id="cd03320">
    <property type="entry name" value="OSBS"/>
    <property type="match status" value="1"/>
</dbReference>
<dbReference type="Gene3D" id="3.20.20.120">
    <property type="entry name" value="Enolase-like C-terminal domain"/>
    <property type="match status" value="1"/>
</dbReference>
<dbReference type="HAMAP" id="MF_00470">
    <property type="entry name" value="MenC_1"/>
    <property type="match status" value="1"/>
</dbReference>
<dbReference type="InterPro" id="IPR036849">
    <property type="entry name" value="Enolase-like_C_sf"/>
</dbReference>
<dbReference type="InterPro" id="IPR029065">
    <property type="entry name" value="Enolase_C-like"/>
</dbReference>
<dbReference type="InterPro" id="IPR013342">
    <property type="entry name" value="Mandelate_racemase_C"/>
</dbReference>
<dbReference type="InterPro" id="IPR010196">
    <property type="entry name" value="OSB_synthase_MenC1"/>
</dbReference>
<dbReference type="NCBIfam" id="NF002782">
    <property type="entry name" value="PRK02901.1"/>
    <property type="match status" value="1"/>
</dbReference>
<dbReference type="PANTHER" id="PTHR48073:SF2">
    <property type="entry name" value="O-SUCCINYLBENZOATE SYNTHASE"/>
    <property type="match status" value="1"/>
</dbReference>
<dbReference type="PANTHER" id="PTHR48073">
    <property type="entry name" value="O-SUCCINYLBENZOATE SYNTHASE-RELATED"/>
    <property type="match status" value="1"/>
</dbReference>
<dbReference type="Pfam" id="PF18374">
    <property type="entry name" value="Enolase_like_N"/>
    <property type="match status" value="1"/>
</dbReference>
<dbReference type="Pfam" id="PF13378">
    <property type="entry name" value="MR_MLE_C"/>
    <property type="match status" value="1"/>
</dbReference>
<dbReference type="SFLD" id="SFLDG00180">
    <property type="entry name" value="muconate_cycloisomerase"/>
    <property type="match status" value="1"/>
</dbReference>
<dbReference type="SFLD" id="SFLDF00009">
    <property type="entry name" value="o-succinylbenzoate_synthase"/>
    <property type="match status" value="1"/>
</dbReference>
<dbReference type="SMART" id="SM00922">
    <property type="entry name" value="MR_MLE"/>
    <property type="match status" value="1"/>
</dbReference>
<dbReference type="SUPFAM" id="SSF51604">
    <property type="entry name" value="Enolase C-terminal domain-like"/>
    <property type="match status" value="1"/>
</dbReference>
<evidence type="ECO:0000255" key="1">
    <source>
        <dbReference type="HAMAP-Rule" id="MF_00470"/>
    </source>
</evidence>
<organism>
    <name type="scientific">Mycobacterium leprae (strain TN)</name>
    <dbReference type="NCBI Taxonomy" id="272631"/>
    <lineage>
        <taxon>Bacteria</taxon>
        <taxon>Bacillati</taxon>
        <taxon>Actinomycetota</taxon>
        <taxon>Actinomycetes</taxon>
        <taxon>Mycobacteriales</taxon>
        <taxon>Mycobacteriaceae</taxon>
        <taxon>Mycobacterium</taxon>
    </lineage>
</organism>
<comment type="function">
    <text evidence="1">Converts 2-succinyl-6-hydroxy-2,4-cyclohexadiene-1-carboxylate (SHCHC) to 2-succinylbenzoate (OSB).</text>
</comment>
<comment type="catalytic activity">
    <reaction evidence="1">
        <text>(1R,6R)-6-hydroxy-2-succinyl-cyclohexa-2,4-diene-1-carboxylate = 2-succinylbenzoate + H2O</text>
        <dbReference type="Rhea" id="RHEA:10196"/>
        <dbReference type="ChEBI" id="CHEBI:15377"/>
        <dbReference type="ChEBI" id="CHEBI:18325"/>
        <dbReference type="ChEBI" id="CHEBI:58689"/>
        <dbReference type="EC" id="4.2.1.113"/>
    </reaction>
</comment>
<comment type="cofactor">
    <cofactor evidence="1">
        <name>a divalent metal cation</name>
        <dbReference type="ChEBI" id="CHEBI:60240"/>
    </cofactor>
</comment>
<comment type="pathway">
    <text evidence="1">Quinol/quinone metabolism; 1,4-dihydroxy-2-naphthoate biosynthesis; 1,4-dihydroxy-2-naphthoate from chorismate: step 4/7.</text>
</comment>
<comment type="pathway">
    <text evidence="1">Quinol/quinone metabolism; menaquinone biosynthesis.</text>
</comment>
<comment type="similarity">
    <text evidence="1">Belongs to the mandelate racemase/muconate lactonizing enzyme family. MenC type 1 subfamily.</text>
</comment>